<feature type="chain" id="PRO_0000252908" description="Fluoride-specific ion channel FluC">
    <location>
        <begin position="1"/>
        <end position="129"/>
    </location>
</feature>
<feature type="transmembrane region" description="Helical" evidence="1">
    <location>
        <begin position="10"/>
        <end position="30"/>
    </location>
</feature>
<feature type="transmembrane region" description="Helical" evidence="1">
    <location>
        <begin position="35"/>
        <end position="55"/>
    </location>
</feature>
<feature type="transmembrane region" description="Helical" evidence="1">
    <location>
        <begin position="71"/>
        <end position="91"/>
    </location>
</feature>
<feature type="transmembrane region" description="Helical" evidence="1">
    <location>
        <begin position="105"/>
        <end position="125"/>
    </location>
</feature>
<feature type="binding site" evidence="1">
    <location>
        <position position="79"/>
    </location>
    <ligand>
        <name>Na(+)</name>
        <dbReference type="ChEBI" id="CHEBI:29101"/>
        <note>structural</note>
    </ligand>
</feature>
<feature type="binding site" evidence="1">
    <location>
        <position position="82"/>
    </location>
    <ligand>
        <name>Na(+)</name>
        <dbReference type="ChEBI" id="CHEBI:29101"/>
        <note>structural</note>
    </ligand>
</feature>
<keyword id="KW-0997">Cell inner membrane</keyword>
<keyword id="KW-1003">Cell membrane</keyword>
<keyword id="KW-0407">Ion channel</keyword>
<keyword id="KW-0406">Ion transport</keyword>
<keyword id="KW-0472">Membrane</keyword>
<keyword id="KW-0479">Metal-binding</keyword>
<keyword id="KW-1185">Reference proteome</keyword>
<keyword id="KW-0915">Sodium</keyword>
<keyword id="KW-0812">Transmembrane</keyword>
<keyword id="KW-1133">Transmembrane helix</keyword>
<keyword id="KW-0813">Transport</keyword>
<gene>
    <name evidence="1" type="primary">fluC</name>
    <name evidence="1" type="synonym">crcB</name>
    <name type="ordered locus">Plut_2040</name>
</gene>
<name>FLUC_CHLL3</name>
<protein>
    <recommendedName>
        <fullName evidence="1">Fluoride-specific ion channel FluC</fullName>
    </recommendedName>
</protein>
<sequence length="129" mass="13472">MSINHPLSVLLVGAGGFLGTVARYLVALAFSPASPGFPFATFSVNIAGSFLIGFLSELAVSTTIVSPEARLFLVTGFCGGFTTFSSYMFEGATLARDGELFYFSLYLAGSIVGGFVALYTGIIAAKPWS</sequence>
<accession>Q3B199</accession>
<comment type="function">
    <text evidence="1">Fluoride-specific ion channel. Important for reducing fluoride concentration in the cell, thus reducing its toxicity.</text>
</comment>
<comment type="catalytic activity">
    <reaction evidence="1">
        <text>fluoride(in) = fluoride(out)</text>
        <dbReference type="Rhea" id="RHEA:76159"/>
        <dbReference type="ChEBI" id="CHEBI:17051"/>
    </reaction>
    <physiologicalReaction direction="left-to-right" evidence="1">
        <dbReference type="Rhea" id="RHEA:76160"/>
    </physiologicalReaction>
</comment>
<comment type="activity regulation">
    <text evidence="1">Na(+) is not transported, but it plays an essential structural role and its presence is essential for fluoride channel function.</text>
</comment>
<comment type="subcellular location">
    <subcellularLocation>
        <location evidence="1">Cell inner membrane</location>
        <topology evidence="1">Multi-pass membrane protein</topology>
    </subcellularLocation>
</comment>
<comment type="similarity">
    <text evidence="1">Belongs to the fluoride channel Fluc/FEX (TC 1.A.43) family.</text>
</comment>
<organism>
    <name type="scientific">Chlorobium luteolum (strain DSM 273 / BCRC 81028 / 2530)</name>
    <name type="common">Pelodictyon luteolum</name>
    <dbReference type="NCBI Taxonomy" id="319225"/>
    <lineage>
        <taxon>Bacteria</taxon>
        <taxon>Pseudomonadati</taxon>
        <taxon>Chlorobiota</taxon>
        <taxon>Chlorobiia</taxon>
        <taxon>Chlorobiales</taxon>
        <taxon>Chlorobiaceae</taxon>
        <taxon>Chlorobium/Pelodictyon group</taxon>
        <taxon>Pelodictyon</taxon>
    </lineage>
</organism>
<dbReference type="EMBL" id="CP000096">
    <property type="protein sequence ID" value="ABB24882.1"/>
    <property type="molecule type" value="Genomic_DNA"/>
</dbReference>
<dbReference type="RefSeq" id="WP_011358752.1">
    <property type="nucleotide sequence ID" value="NC_007512.1"/>
</dbReference>
<dbReference type="SMR" id="Q3B199"/>
<dbReference type="STRING" id="319225.Plut_2040"/>
<dbReference type="TCDB" id="1.A.43.1.6">
    <property type="family name" value="the camphor resistance or fluoride exporter (fluc) family"/>
</dbReference>
<dbReference type="KEGG" id="plt:Plut_2040"/>
<dbReference type="eggNOG" id="COG0239">
    <property type="taxonomic scope" value="Bacteria"/>
</dbReference>
<dbReference type="HOGENOM" id="CLU_114342_2_3_10"/>
<dbReference type="OrthoDB" id="9815830at2"/>
<dbReference type="Proteomes" id="UP000002709">
    <property type="component" value="Chromosome"/>
</dbReference>
<dbReference type="GO" id="GO:0005886">
    <property type="term" value="C:plasma membrane"/>
    <property type="evidence" value="ECO:0007669"/>
    <property type="project" value="UniProtKB-SubCell"/>
</dbReference>
<dbReference type="GO" id="GO:0062054">
    <property type="term" value="F:fluoride channel activity"/>
    <property type="evidence" value="ECO:0007669"/>
    <property type="project" value="UniProtKB-UniRule"/>
</dbReference>
<dbReference type="GO" id="GO:0046872">
    <property type="term" value="F:metal ion binding"/>
    <property type="evidence" value="ECO:0007669"/>
    <property type="project" value="UniProtKB-KW"/>
</dbReference>
<dbReference type="GO" id="GO:0140114">
    <property type="term" value="P:cellular detoxification of fluoride"/>
    <property type="evidence" value="ECO:0007669"/>
    <property type="project" value="UniProtKB-UniRule"/>
</dbReference>
<dbReference type="HAMAP" id="MF_00454">
    <property type="entry name" value="FluC"/>
    <property type="match status" value="1"/>
</dbReference>
<dbReference type="InterPro" id="IPR003691">
    <property type="entry name" value="FluC"/>
</dbReference>
<dbReference type="NCBIfam" id="TIGR00494">
    <property type="entry name" value="crcB"/>
    <property type="match status" value="1"/>
</dbReference>
<dbReference type="PANTHER" id="PTHR28259">
    <property type="entry name" value="FLUORIDE EXPORT PROTEIN 1-RELATED"/>
    <property type="match status" value="1"/>
</dbReference>
<dbReference type="PANTHER" id="PTHR28259:SF1">
    <property type="entry name" value="FLUORIDE EXPORT PROTEIN 1-RELATED"/>
    <property type="match status" value="1"/>
</dbReference>
<dbReference type="Pfam" id="PF02537">
    <property type="entry name" value="CRCB"/>
    <property type="match status" value="1"/>
</dbReference>
<evidence type="ECO:0000255" key="1">
    <source>
        <dbReference type="HAMAP-Rule" id="MF_00454"/>
    </source>
</evidence>
<reference key="1">
    <citation type="submission" date="2005-08" db="EMBL/GenBank/DDBJ databases">
        <title>Complete sequence of Pelodictyon luteolum DSM 273.</title>
        <authorList>
            <consortium name="US DOE Joint Genome Institute"/>
            <person name="Copeland A."/>
            <person name="Lucas S."/>
            <person name="Lapidus A."/>
            <person name="Barry K."/>
            <person name="Detter J.C."/>
            <person name="Glavina T."/>
            <person name="Hammon N."/>
            <person name="Israni S."/>
            <person name="Pitluck S."/>
            <person name="Bryant D."/>
            <person name="Schmutz J."/>
            <person name="Larimer F."/>
            <person name="Land M."/>
            <person name="Kyrpides N."/>
            <person name="Ivanova N."/>
            <person name="Richardson P."/>
        </authorList>
    </citation>
    <scope>NUCLEOTIDE SEQUENCE [LARGE SCALE GENOMIC DNA]</scope>
    <source>
        <strain>DSM 273 / BCRC 81028 / 2530</strain>
    </source>
</reference>
<proteinExistence type="inferred from homology"/>